<dbReference type="EC" id="5.4.99.12" evidence="1"/>
<dbReference type="EMBL" id="CP001338">
    <property type="protein sequence ID" value="ACL17978.1"/>
    <property type="molecule type" value="Genomic_DNA"/>
</dbReference>
<dbReference type="RefSeq" id="WP_012619297.1">
    <property type="nucleotide sequence ID" value="NC_011832.1"/>
</dbReference>
<dbReference type="SMR" id="B8GFU5"/>
<dbReference type="STRING" id="521011.Mpal_2714"/>
<dbReference type="GeneID" id="7270822"/>
<dbReference type="KEGG" id="mpl:Mpal_2714"/>
<dbReference type="eggNOG" id="arCOG04449">
    <property type="taxonomic scope" value="Archaea"/>
</dbReference>
<dbReference type="HOGENOM" id="CLU_014673_4_2_2"/>
<dbReference type="OrthoDB" id="25720at2157"/>
<dbReference type="Proteomes" id="UP000002457">
    <property type="component" value="Chromosome"/>
</dbReference>
<dbReference type="GO" id="GO:0003723">
    <property type="term" value="F:RNA binding"/>
    <property type="evidence" value="ECO:0007669"/>
    <property type="project" value="InterPro"/>
</dbReference>
<dbReference type="GO" id="GO:0160147">
    <property type="term" value="F:tRNA pseudouridine(38-40) synthase activity"/>
    <property type="evidence" value="ECO:0007669"/>
    <property type="project" value="UniProtKB-EC"/>
</dbReference>
<dbReference type="GO" id="GO:0031119">
    <property type="term" value="P:tRNA pseudouridine synthesis"/>
    <property type="evidence" value="ECO:0007669"/>
    <property type="project" value="UniProtKB-UniRule"/>
</dbReference>
<dbReference type="CDD" id="cd02570">
    <property type="entry name" value="PseudoU_synth_EcTruA"/>
    <property type="match status" value="1"/>
</dbReference>
<dbReference type="Gene3D" id="3.30.70.660">
    <property type="entry name" value="Pseudouridine synthase I, catalytic domain, C-terminal subdomain"/>
    <property type="match status" value="1"/>
</dbReference>
<dbReference type="Gene3D" id="3.30.70.580">
    <property type="entry name" value="Pseudouridine synthase I, catalytic domain, N-terminal subdomain"/>
    <property type="match status" value="1"/>
</dbReference>
<dbReference type="HAMAP" id="MF_00171">
    <property type="entry name" value="TruA"/>
    <property type="match status" value="1"/>
</dbReference>
<dbReference type="InterPro" id="IPR020103">
    <property type="entry name" value="PsdUridine_synth_cat_dom_sf"/>
</dbReference>
<dbReference type="InterPro" id="IPR001406">
    <property type="entry name" value="PsdUridine_synth_TruA"/>
</dbReference>
<dbReference type="InterPro" id="IPR020097">
    <property type="entry name" value="PsdUridine_synth_TruA_a/b_dom"/>
</dbReference>
<dbReference type="InterPro" id="IPR020095">
    <property type="entry name" value="PsdUridine_synth_TruA_C"/>
</dbReference>
<dbReference type="InterPro" id="IPR020094">
    <property type="entry name" value="TruA/RsuA/RluB/E/F_N"/>
</dbReference>
<dbReference type="NCBIfam" id="TIGR00071">
    <property type="entry name" value="hisT_truA"/>
    <property type="match status" value="1"/>
</dbReference>
<dbReference type="PANTHER" id="PTHR11142">
    <property type="entry name" value="PSEUDOURIDYLATE SYNTHASE"/>
    <property type="match status" value="1"/>
</dbReference>
<dbReference type="PANTHER" id="PTHR11142:SF0">
    <property type="entry name" value="TRNA PSEUDOURIDINE SYNTHASE-LIKE 1"/>
    <property type="match status" value="1"/>
</dbReference>
<dbReference type="Pfam" id="PF01416">
    <property type="entry name" value="PseudoU_synth_1"/>
    <property type="match status" value="1"/>
</dbReference>
<dbReference type="PIRSF" id="PIRSF001430">
    <property type="entry name" value="tRNA_psdUrid_synth"/>
    <property type="match status" value="1"/>
</dbReference>
<dbReference type="SUPFAM" id="SSF55120">
    <property type="entry name" value="Pseudouridine synthase"/>
    <property type="match status" value="1"/>
</dbReference>
<protein>
    <recommendedName>
        <fullName evidence="1">tRNA pseudouridine synthase A</fullName>
        <ecNumber evidence="1">5.4.99.12</ecNumber>
    </recommendedName>
    <alternativeName>
        <fullName evidence="1">tRNA pseudouridine(38-40) synthase</fullName>
    </alternativeName>
    <alternativeName>
        <fullName evidence="1">tRNA pseudouridylate synthase I</fullName>
    </alternativeName>
    <alternativeName>
        <fullName evidence="1">tRNA-uridine isomerase I</fullName>
    </alternativeName>
</protein>
<proteinExistence type="inferred from homology"/>
<feature type="chain" id="PRO_1000194584" description="tRNA pseudouridine synthase A">
    <location>
        <begin position="1"/>
        <end position="280"/>
    </location>
</feature>
<feature type="active site" description="Nucleophile" evidence="1">
    <location>
        <position position="55"/>
    </location>
</feature>
<feature type="binding site" evidence="1">
    <location>
        <position position="110"/>
    </location>
    <ligand>
        <name>substrate</name>
    </ligand>
</feature>
<comment type="function">
    <text evidence="1">Formation of pseudouridine at positions 38, 39 and 40 in the anticodon stem and loop of transfer RNAs.</text>
</comment>
<comment type="catalytic activity">
    <reaction evidence="1">
        <text>uridine(38/39/40) in tRNA = pseudouridine(38/39/40) in tRNA</text>
        <dbReference type="Rhea" id="RHEA:22376"/>
        <dbReference type="Rhea" id="RHEA-COMP:10085"/>
        <dbReference type="Rhea" id="RHEA-COMP:10087"/>
        <dbReference type="ChEBI" id="CHEBI:65314"/>
        <dbReference type="ChEBI" id="CHEBI:65315"/>
        <dbReference type="EC" id="5.4.99.12"/>
    </reaction>
</comment>
<comment type="similarity">
    <text evidence="1">Belongs to the tRNA pseudouridine synthase TruA family.</text>
</comment>
<keyword id="KW-0413">Isomerase</keyword>
<keyword id="KW-1185">Reference proteome</keyword>
<keyword id="KW-0819">tRNA processing</keyword>
<name>TRUA_METPE</name>
<sequence length="280" mass="31429">MRLAFQLSYDGNQFRGSQLQPAYRTVEGELITACQRVQLFDDPCKAGFALAGRTDRGVHARGQVGAFSTPFPERAVEALNGQLSPDLWCNGFAEVPPSFHPRFDAISRTYRYFFADWPLDIRAMDQAAAALIGTHDFSRLARVREKSPIRTVKSARVFQDRGIPVFEVTAHTYLWHMVRCMAAALLLIGTHEREPELMERLLSGKCRRNPPAAPADGLVLWDVDCGVTFTPTEPDPRSRDWIGSARREAMVRERIIGLLDRSGVDRRGKEPGDDSGRDLL</sequence>
<gene>
    <name evidence="1" type="primary">truA</name>
    <name type="ordered locus">Mpal_2714</name>
</gene>
<accession>B8GFU5</accession>
<evidence type="ECO:0000255" key="1">
    <source>
        <dbReference type="HAMAP-Rule" id="MF_00171"/>
    </source>
</evidence>
<reference key="1">
    <citation type="journal article" date="2015" name="Genome Announc.">
        <title>Complete Genome Sequence of Methanosphaerula palustris E1-9CT, a Hydrogenotrophic Methanogen Isolated from a Minerotrophic Fen Peatland.</title>
        <authorList>
            <person name="Cadillo-Quiroz H."/>
            <person name="Browne P."/>
            <person name="Kyrpides N."/>
            <person name="Woyke T."/>
            <person name="Goodwin L."/>
            <person name="Detter C."/>
            <person name="Yavitt J.B."/>
            <person name="Zinder S.H."/>
        </authorList>
    </citation>
    <scope>NUCLEOTIDE SEQUENCE [LARGE SCALE GENOMIC DNA]</scope>
    <source>
        <strain>ATCC BAA-1556 / DSM 19958 / E1-9c</strain>
    </source>
</reference>
<organism>
    <name type="scientific">Methanosphaerula palustris (strain ATCC BAA-1556 / DSM 19958 / E1-9c)</name>
    <dbReference type="NCBI Taxonomy" id="521011"/>
    <lineage>
        <taxon>Archaea</taxon>
        <taxon>Methanobacteriati</taxon>
        <taxon>Methanobacteriota</taxon>
        <taxon>Stenosarchaea group</taxon>
        <taxon>Methanomicrobia</taxon>
        <taxon>Methanomicrobiales</taxon>
        <taxon>Methanoregulaceae</taxon>
        <taxon>Methanosphaerula</taxon>
    </lineage>
</organism>